<comment type="function">
    <text evidence="5">Present in the aqueous fluid surrounding olfactory sensory dendrites and are thought to aid in the capture and transport of hydrophobic odorants into and through this fluid.</text>
</comment>
<comment type="similarity">
    <text evidence="2">Belongs to the PBP/GOBP family.</text>
</comment>
<gene>
    <name evidence="6" type="primary">Obp57c</name>
    <name type="ORF">CG13421</name>
</gene>
<accession>Q9V931</accession>
<accession>A8DYJ8</accession>
<accession>Q4V3N2</accession>
<organism>
    <name type="scientific">Drosophila melanogaster</name>
    <name type="common">Fruit fly</name>
    <dbReference type="NCBI Taxonomy" id="7227"/>
    <lineage>
        <taxon>Eukaryota</taxon>
        <taxon>Metazoa</taxon>
        <taxon>Ecdysozoa</taxon>
        <taxon>Arthropoda</taxon>
        <taxon>Hexapoda</taxon>
        <taxon>Insecta</taxon>
        <taxon>Pterygota</taxon>
        <taxon>Neoptera</taxon>
        <taxon>Endopterygota</taxon>
        <taxon>Diptera</taxon>
        <taxon>Brachycera</taxon>
        <taxon>Muscomorpha</taxon>
        <taxon>Ephydroidea</taxon>
        <taxon>Drosophilidae</taxon>
        <taxon>Drosophila</taxon>
        <taxon>Sophophora</taxon>
    </lineage>
</organism>
<sequence length="149" mass="17223">MLKLWLICILTVSVVSIQSLSLLEETNYVSDCLASNNISQAEFQELIDRNSSEEDDLENTDRRYKCFIHCLAEKGNLLDTNGYLDVDKIDQIEPVSDELREILYDCKKIYDEEEDHCEYAFKMVTCLTESFEQSDEVTEAGKNTNKLNE</sequence>
<reference evidence="5 6" key="1">
    <citation type="journal article" date="2000" name="Science">
        <title>The genome sequence of Drosophila melanogaster.</title>
        <authorList>
            <person name="Adams M.D."/>
            <person name="Celniker S.E."/>
            <person name="Holt R.A."/>
            <person name="Evans C.A."/>
            <person name="Gocayne J.D."/>
            <person name="Amanatides P.G."/>
            <person name="Scherer S.E."/>
            <person name="Li P.W."/>
            <person name="Hoskins R.A."/>
            <person name="Galle R.F."/>
            <person name="George R.A."/>
            <person name="Lewis S.E."/>
            <person name="Richards S."/>
            <person name="Ashburner M."/>
            <person name="Henderson S.N."/>
            <person name="Sutton G.G."/>
            <person name="Wortman J.R."/>
            <person name="Yandell M.D."/>
            <person name="Zhang Q."/>
            <person name="Chen L.X."/>
            <person name="Brandon R.C."/>
            <person name="Rogers Y.-H.C."/>
            <person name="Blazej R.G."/>
            <person name="Champe M."/>
            <person name="Pfeiffer B.D."/>
            <person name="Wan K.H."/>
            <person name="Doyle C."/>
            <person name="Baxter E.G."/>
            <person name="Helt G."/>
            <person name="Nelson C.R."/>
            <person name="Miklos G.L.G."/>
            <person name="Abril J.F."/>
            <person name="Agbayani A."/>
            <person name="An H.-J."/>
            <person name="Andrews-Pfannkoch C."/>
            <person name="Baldwin D."/>
            <person name="Ballew R.M."/>
            <person name="Basu A."/>
            <person name="Baxendale J."/>
            <person name="Bayraktaroglu L."/>
            <person name="Beasley E.M."/>
            <person name="Beeson K.Y."/>
            <person name="Benos P.V."/>
            <person name="Berman B.P."/>
            <person name="Bhandari D."/>
            <person name="Bolshakov S."/>
            <person name="Borkova D."/>
            <person name="Botchan M.R."/>
            <person name="Bouck J."/>
            <person name="Brokstein P."/>
            <person name="Brottier P."/>
            <person name="Burtis K.C."/>
            <person name="Busam D.A."/>
            <person name="Butler H."/>
            <person name="Cadieu E."/>
            <person name="Center A."/>
            <person name="Chandra I."/>
            <person name="Cherry J.M."/>
            <person name="Cawley S."/>
            <person name="Dahlke C."/>
            <person name="Davenport L.B."/>
            <person name="Davies P."/>
            <person name="de Pablos B."/>
            <person name="Delcher A."/>
            <person name="Deng Z."/>
            <person name="Mays A.D."/>
            <person name="Dew I."/>
            <person name="Dietz S.M."/>
            <person name="Dodson K."/>
            <person name="Doup L.E."/>
            <person name="Downes M."/>
            <person name="Dugan-Rocha S."/>
            <person name="Dunkov B.C."/>
            <person name="Dunn P."/>
            <person name="Durbin K.J."/>
            <person name="Evangelista C.C."/>
            <person name="Ferraz C."/>
            <person name="Ferriera S."/>
            <person name="Fleischmann W."/>
            <person name="Fosler C."/>
            <person name="Gabrielian A.E."/>
            <person name="Garg N.S."/>
            <person name="Gelbart W.M."/>
            <person name="Glasser K."/>
            <person name="Glodek A."/>
            <person name="Gong F."/>
            <person name="Gorrell J.H."/>
            <person name="Gu Z."/>
            <person name="Guan P."/>
            <person name="Harris M."/>
            <person name="Harris N.L."/>
            <person name="Harvey D.A."/>
            <person name="Heiman T.J."/>
            <person name="Hernandez J.R."/>
            <person name="Houck J."/>
            <person name="Hostin D."/>
            <person name="Houston K.A."/>
            <person name="Howland T.J."/>
            <person name="Wei M.-H."/>
            <person name="Ibegwam C."/>
            <person name="Jalali M."/>
            <person name="Kalush F."/>
            <person name="Karpen G.H."/>
            <person name="Ke Z."/>
            <person name="Kennison J.A."/>
            <person name="Ketchum K.A."/>
            <person name="Kimmel B.E."/>
            <person name="Kodira C.D."/>
            <person name="Kraft C.L."/>
            <person name="Kravitz S."/>
            <person name="Kulp D."/>
            <person name="Lai Z."/>
            <person name="Lasko P."/>
            <person name="Lei Y."/>
            <person name="Levitsky A.A."/>
            <person name="Li J.H."/>
            <person name="Li Z."/>
            <person name="Liang Y."/>
            <person name="Lin X."/>
            <person name="Liu X."/>
            <person name="Mattei B."/>
            <person name="McIntosh T.C."/>
            <person name="McLeod M.P."/>
            <person name="McPherson D."/>
            <person name="Merkulov G."/>
            <person name="Milshina N.V."/>
            <person name="Mobarry C."/>
            <person name="Morris J."/>
            <person name="Moshrefi A."/>
            <person name="Mount S.M."/>
            <person name="Moy M."/>
            <person name="Murphy B."/>
            <person name="Murphy L."/>
            <person name="Muzny D.M."/>
            <person name="Nelson D.L."/>
            <person name="Nelson D.R."/>
            <person name="Nelson K.A."/>
            <person name="Nixon K."/>
            <person name="Nusskern D.R."/>
            <person name="Pacleb J.M."/>
            <person name="Palazzolo M."/>
            <person name="Pittman G.S."/>
            <person name="Pan S."/>
            <person name="Pollard J."/>
            <person name="Puri V."/>
            <person name="Reese M.G."/>
            <person name="Reinert K."/>
            <person name="Remington K."/>
            <person name="Saunders R.D.C."/>
            <person name="Scheeler F."/>
            <person name="Shen H."/>
            <person name="Shue B.C."/>
            <person name="Siden-Kiamos I."/>
            <person name="Simpson M."/>
            <person name="Skupski M.P."/>
            <person name="Smith T.J."/>
            <person name="Spier E."/>
            <person name="Spradling A.C."/>
            <person name="Stapleton M."/>
            <person name="Strong R."/>
            <person name="Sun E."/>
            <person name="Svirskas R."/>
            <person name="Tector C."/>
            <person name="Turner R."/>
            <person name="Venter E."/>
            <person name="Wang A.H."/>
            <person name="Wang X."/>
            <person name="Wang Z.-Y."/>
            <person name="Wassarman D.A."/>
            <person name="Weinstock G.M."/>
            <person name="Weissenbach J."/>
            <person name="Williams S.M."/>
            <person name="Woodage T."/>
            <person name="Worley K.C."/>
            <person name="Wu D."/>
            <person name="Yang S."/>
            <person name="Yao Q.A."/>
            <person name="Ye J."/>
            <person name="Yeh R.-F."/>
            <person name="Zaveri J.S."/>
            <person name="Zhan M."/>
            <person name="Zhang G."/>
            <person name="Zhao Q."/>
            <person name="Zheng L."/>
            <person name="Zheng X.H."/>
            <person name="Zhong F.N."/>
            <person name="Zhong W."/>
            <person name="Zhou X."/>
            <person name="Zhu S.C."/>
            <person name="Zhu X."/>
            <person name="Smith H.O."/>
            <person name="Gibbs R.A."/>
            <person name="Myers E.W."/>
            <person name="Rubin G.M."/>
            <person name="Venter J.C."/>
        </authorList>
    </citation>
    <scope>NUCLEOTIDE SEQUENCE [LARGE SCALE GENOMIC DNA]</scope>
    <source>
        <strain evidence="3">Berkeley</strain>
    </source>
</reference>
<reference evidence="5 6" key="2">
    <citation type="journal article" date="2002" name="Genome Biol.">
        <title>Annotation of the Drosophila melanogaster euchromatic genome: a systematic review.</title>
        <authorList>
            <person name="Misra S."/>
            <person name="Crosby M.A."/>
            <person name="Mungall C.J."/>
            <person name="Matthews B.B."/>
            <person name="Campbell K.S."/>
            <person name="Hradecky P."/>
            <person name="Huang Y."/>
            <person name="Kaminker J.S."/>
            <person name="Millburn G.H."/>
            <person name="Prochnik S.E."/>
            <person name="Smith C.D."/>
            <person name="Tupy J.L."/>
            <person name="Whitfield E.J."/>
            <person name="Bayraktaroglu L."/>
            <person name="Berman B.P."/>
            <person name="Bettencourt B.R."/>
            <person name="Celniker S.E."/>
            <person name="de Grey A.D.N.J."/>
            <person name="Drysdale R.A."/>
            <person name="Harris N.L."/>
            <person name="Richter J."/>
            <person name="Russo S."/>
            <person name="Schroeder A.J."/>
            <person name="Shu S.Q."/>
            <person name="Stapleton M."/>
            <person name="Yamada C."/>
            <person name="Ashburner M."/>
            <person name="Gelbart W.M."/>
            <person name="Rubin G.M."/>
            <person name="Lewis S.E."/>
        </authorList>
    </citation>
    <scope>GENOME REANNOTATION</scope>
    <source>
        <strain>Berkeley</strain>
    </source>
</reference>
<reference evidence="5 7" key="3">
    <citation type="journal article" date="2002" name="Genome Biol.">
        <title>A Drosophila full-length cDNA resource.</title>
        <authorList>
            <person name="Stapleton M."/>
            <person name="Carlson J.W."/>
            <person name="Brokstein P."/>
            <person name="Yu C."/>
            <person name="Champe M."/>
            <person name="George R.A."/>
            <person name="Guarin H."/>
            <person name="Kronmiller B."/>
            <person name="Pacleb J.M."/>
            <person name="Park S."/>
            <person name="Wan K.H."/>
            <person name="Rubin G.M."/>
            <person name="Celniker S.E."/>
        </authorList>
    </citation>
    <scope>NUCLEOTIDE SEQUENCE [LARGE SCALE MRNA]</scope>
    <source>
        <strain evidence="7">Berkeley</strain>
        <tissue evidence="4">Head</tissue>
    </source>
</reference>
<reference key="4">
    <citation type="submission" date="2005-05" db="EMBL/GenBank/DDBJ databases">
        <authorList>
            <person name="Stapleton M."/>
            <person name="Carlson J.W."/>
            <person name="Chavez C."/>
            <person name="Frise E."/>
            <person name="George R.A."/>
            <person name="Pacleb J.M."/>
            <person name="Park S."/>
            <person name="Wan K.H."/>
            <person name="Yu C."/>
            <person name="Celniker S.E."/>
        </authorList>
    </citation>
    <scope>NUCLEOTIDE SEQUENCE [LARGE SCALE MRNA]</scope>
    <source>
        <strain>Berkeley</strain>
    </source>
</reference>
<reference evidence="5" key="5">
    <citation type="journal article" date="2002" name="Gene">
        <title>The odorant-binding proteins of Drosophila melanogaster: annotation and characterization of a divergent gene family.</title>
        <authorList>
            <person name="Graham L.A."/>
            <person name="Davies P.L."/>
        </authorList>
    </citation>
    <scope>IDENTIFICATION</scope>
</reference>
<reference evidence="5" key="6">
    <citation type="journal article" date="2002" name="Genome Res.">
        <title>Genome-wide analysis of the odorant-binding protein gene family in Drosophila melanogaster.</title>
        <authorList>
            <person name="Hekmat-Scafe D.S."/>
            <person name="Scafe C.R."/>
            <person name="McKinney A.J."/>
            <person name="Tanouye M.A."/>
        </authorList>
    </citation>
    <scope>IDENTIFICATION</scope>
</reference>
<protein>
    <recommendedName>
        <fullName>General odorant-binding protein 57c</fullName>
    </recommendedName>
</protein>
<dbReference type="EMBL" id="AE013599">
    <property type="protein sequence ID" value="AAF57467.1"/>
    <property type="molecule type" value="Genomic_DNA"/>
</dbReference>
<dbReference type="EMBL" id="AE013599">
    <property type="protein sequence ID" value="ABV53859.1"/>
    <property type="molecule type" value="Genomic_DNA"/>
</dbReference>
<dbReference type="EMBL" id="AY075565">
    <property type="protein sequence ID" value="AAL68372.1"/>
    <property type="molecule type" value="mRNA"/>
</dbReference>
<dbReference type="EMBL" id="BT023324">
    <property type="protein sequence ID" value="AAY55740.1"/>
    <property type="molecule type" value="mRNA"/>
</dbReference>
<dbReference type="RefSeq" id="NP_611481.1">
    <property type="nucleotide sequence ID" value="NM_137637.3"/>
</dbReference>
<dbReference type="SMR" id="Q9V931"/>
<dbReference type="BioGRID" id="62966">
    <property type="interactions" value="15"/>
</dbReference>
<dbReference type="FunCoup" id="Q9V931">
    <property type="interactions" value="60"/>
</dbReference>
<dbReference type="IntAct" id="Q9V931">
    <property type="interactions" value="15"/>
</dbReference>
<dbReference type="STRING" id="7227.FBpp0085604"/>
<dbReference type="PaxDb" id="7227-FBpp0085604"/>
<dbReference type="DNASU" id="37311"/>
<dbReference type="EnsemblMetazoa" id="FBtr0086292">
    <property type="protein sequence ID" value="FBpp0085604"/>
    <property type="gene ID" value="FBgn0034509"/>
</dbReference>
<dbReference type="GeneID" id="37311"/>
<dbReference type="KEGG" id="dme:Dmel_CG13421"/>
<dbReference type="UCSC" id="CG13421-RB">
    <property type="organism name" value="d. melanogaster"/>
</dbReference>
<dbReference type="AGR" id="FB:FBgn0034509"/>
<dbReference type="CTD" id="37311"/>
<dbReference type="FlyBase" id="FBgn0034509">
    <property type="gene designation" value="Obp57c"/>
</dbReference>
<dbReference type="VEuPathDB" id="VectorBase:FBgn0034509"/>
<dbReference type="eggNOG" id="ENOG502T9CN">
    <property type="taxonomic scope" value="Eukaryota"/>
</dbReference>
<dbReference type="HOGENOM" id="CLU_146927_0_0_1"/>
<dbReference type="InParanoid" id="Q9V931"/>
<dbReference type="OMA" id="KYKCFAH"/>
<dbReference type="OrthoDB" id="7947612at2759"/>
<dbReference type="PhylomeDB" id="Q9V931"/>
<dbReference type="BioGRID-ORCS" id="37311">
    <property type="hits" value="0 hits in 1 CRISPR screen"/>
</dbReference>
<dbReference type="GenomeRNAi" id="37311"/>
<dbReference type="PRO" id="PR:Q9V931"/>
<dbReference type="Proteomes" id="UP000000803">
    <property type="component" value="Chromosome 2R"/>
</dbReference>
<dbReference type="Bgee" id="FBgn0034509">
    <property type="expression patterns" value="Expressed in tormogen cell in proboscis and 90 other cell types or tissues"/>
</dbReference>
<dbReference type="ExpressionAtlas" id="Q9V931">
    <property type="expression patterns" value="baseline and differential"/>
</dbReference>
<dbReference type="GO" id="GO:0005576">
    <property type="term" value="C:extracellular region"/>
    <property type="evidence" value="ECO:0000255"/>
    <property type="project" value="FlyBase"/>
</dbReference>
<dbReference type="GO" id="GO:0005615">
    <property type="term" value="C:extracellular space"/>
    <property type="evidence" value="ECO:0000318"/>
    <property type="project" value="GO_Central"/>
</dbReference>
<dbReference type="GO" id="GO:0005549">
    <property type="term" value="F:odorant binding"/>
    <property type="evidence" value="ECO:0000250"/>
    <property type="project" value="FlyBase"/>
</dbReference>
<dbReference type="GO" id="GO:1990834">
    <property type="term" value="P:response to odorant"/>
    <property type="evidence" value="ECO:0000303"/>
    <property type="project" value="UniProtKB"/>
</dbReference>
<dbReference type="GO" id="GO:0007606">
    <property type="term" value="P:sensory perception of chemical stimulus"/>
    <property type="evidence" value="ECO:0000250"/>
    <property type="project" value="FlyBase"/>
</dbReference>
<dbReference type="GO" id="GO:0007608">
    <property type="term" value="P:sensory perception of smell"/>
    <property type="evidence" value="ECO:0000318"/>
    <property type="project" value="GO_Central"/>
</dbReference>
<dbReference type="CDD" id="cd23992">
    <property type="entry name" value="PBP_GOBP"/>
    <property type="match status" value="1"/>
</dbReference>
<dbReference type="Gene3D" id="1.10.238.20">
    <property type="entry name" value="Pheromone/general odorant binding protein domain"/>
    <property type="match status" value="1"/>
</dbReference>
<dbReference type="InterPro" id="IPR006170">
    <property type="entry name" value="PBP/GOBP"/>
</dbReference>
<dbReference type="InterPro" id="IPR036728">
    <property type="entry name" value="PBP_GOBP_sf"/>
</dbReference>
<dbReference type="PANTHER" id="PTHR11857:SF48">
    <property type="entry name" value="GENERAL ODORANT-BINDING PROTEIN 57C-RELATED"/>
    <property type="match status" value="1"/>
</dbReference>
<dbReference type="PANTHER" id="PTHR11857">
    <property type="entry name" value="ODORANT BINDING PROTEIN-RELATED"/>
    <property type="match status" value="1"/>
</dbReference>
<dbReference type="Pfam" id="PF01395">
    <property type="entry name" value="PBP_GOBP"/>
    <property type="match status" value="1"/>
</dbReference>
<dbReference type="SMART" id="SM00708">
    <property type="entry name" value="PhBP"/>
    <property type="match status" value="1"/>
</dbReference>
<dbReference type="SUPFAM" id="SSF47565">
    <property type="entry name" value="Insect pheromone/odorant-binding proteins"/>
    <property type="match status" value="1"/>
</dbReference>
<evidence type="ECO:0000250" key="1"/>
<evidence type="ECO:0000255" key="2"/>
<evidence type="ECO:0000269" key="3">
    <source>
    </source>
</evidence>
<evidence type="ECO:0000269" key="4">
    <source>
    </source>
</evidence>
<evidence type="ECO:0000305" key="5"/>
<evidence type="ECO:0000312" key="6">
    <source>
        <dbReference type="EMBL" id="AAF57467.1"/>
    </source>
</evidence>
<evidence type="ECO:0000312" key="7">
    <source>
        <dbReference type="EMBL" id="AAL68372.1"/>
    </source>
</evidence>
<name>OB57C_DROME</name>
<feature type="signal peptide" evidence="2">
    <location>
        <begin position="1"/>
        <end position="16"/>
    </location>
</feature>
<feature type="chain" id="PRO_0000012574" description="General odorant-binding protein 57c" evidence="2">
    <location>
        <begin position="17"/>
        <end position="149"/>
    </location>
</feature>
<feature type="disulfide bond" evidence="1">
    <location>
        <begin position="32"/>
        <end position="70"/>
    </location>
</feature>
<feature type="disulfide bond" evidence="1">
    <location>
        <begin position="66"/>
        <end position="117"/>
    </location>
</feature>
<feature type="disulfide bond" evidence="1">
    <location>
        <begin position="106"/>
        <end position="126"/>
    </location>
</feature>
<keyword id="KW-1015">Disulfide bond</keyword>
<keyword id="KW-0552">Olfaction</keyword>
<keyword id="KW-1185">Reference proteome</keyword>
<keyword id="KW-0716">Sensory transduction</keyword>
<keyword id="KW-0732">Signal</keyword>
<keyword id="KW-0813">Transport</keyword>
<proteinExistence type="evidence at transcript level"/>